<feature type="chain" id="PRO_0000277218" description="Photosystem II reaction center protein Z">
    <location>
        <begin position="1"/>
        <end position="62"/>
    </location>
</feature>
<feature type="transmembrane region" description="Helical" evidence="1">
    <location>
        <begin position="8"/>
        <end position="28"/>
    </location>
</feature>
<feature type="transmembrane region" description="Helical" evidence="1">
    <location>
        <begin position="41"/>
        <end position="61"/>
    </location>
</feature>
<accession>A0ZZ32</accession>
<comment type="function">
    <text evidence="1">May control the interaction of photosystem II (PSII) cores with the light-harvesting antenna, regulates electron flow through the 2 photosystem reaction centers. PSII is a light-driven water plastoquinone oxidoreductase, using light energy to abstract electrons from H(2)O, generating a proton gradient subsequently used for ATP formation.</text>
</comment>
<comment type="subunit">
    <text evidence="1">PSII is composed of 1 copy each of membrane proteins PsbA, PsbB, PsbC, PsbD, PsbE, PsbF, PsbH, PsbI, PsbJ, PsbK, PsbL, PsbM, PsbT, PsbY, PsbZ, Psb30/Ycf12, at least 3 peripheral proteins of the oxygen-evolving complex and a large number of cofactors. It forms dimeric complexes.</text>
</comment>
<comment type="subcellular location">
    <subcellularLocation>
        <location evidence="1">Plastid</location>
        <location evidence="1">Chloroplast thylakoid membrane</location>
        <topology evidence="1">Multi-pass membrane protein</topology>
    </subcellularLocation>
</comment>
<comment type="similarity">
    <text evidence="1">Belongs to the PsbZ family.</text>
</comment>
<organism>
    <name type="scientific">Gossypium barbadense</name>
    <name type="common">Sea Island cotton</name>
    <name type="synonym">Hibiscus barbadensis</name>
    <dbReference type="NCBI Taxonomy" id="3634"/>
    <lineage>
        <taxon>Eukaryota</taxon>
        <taxon>Viridiplantae</taxon>
        <taxon>Streptophyta</taxon>
        <taxon>Embryophyta</taxon>
        <taxon>Tracheophyta</taxon>
        <taxon>Spermatophyta</taxon>
        <taxon>Magnoliopsida</taxon>
        <taxon>eudicotyledons</taxon>
        <taxon>Gunneridae</taxon>
        <taxon>Pentapetalae</taxon>
        <taxon>rosids</taxon>
        <taxon>malvids</taxon>
        <taxon>Malvales</taxon>
        <taxon>Malvaceae</taxon>
        <taxon>Malvoideae</taxon>
        <taxon>Gossypium</taxon>
    </lineage>
</organism>
<reference key="1">
    <citation type="journal article" date="2006" name="Genes Genet. Syst.">
        <title>Complete nucleotide sequence of the cotton (Gossypium barbadense L.) chloroplast genome with a comparative analysis of sequences among 9 dicot plants.</title>
        <authorList>
            <person name="Ibrahim R.I.H."/>
            <person name="Azuma J."/>
            <person name="Sakamoto M."/>
        </authorList>
    </citation>
    <scope>NUCLEOTIDE SEQUENCE [LARGE SCALE GENOMIC DNA]</scope>
</reference>
<proteinExistence type="inferred from homology"/>
<name>PSBZ_GOSBA</name>
<gene>
    <name evidence="1" type="primary">psbZ</name>
</gene>
<keyword id="KW-0150">Chloroplast</keyword>
<keyword id="KW-0472">Membrane</keyword>
<keyword id="KW-0602">Photosynthesis</keyword>
<keyword id="KW-0604">Photosystem II</keyword>
<keyword id="KW-0934">Plastid</keyword>
<keyword id="KW-0674">Reaction center</keyword>
<keyword id="KW-0793">Thylakoid</keyword>
<keyword id="KW-0812">Transmembrane</keyword>
<keyword id="KW-1133">Transmembrane helix</keyword>
<dbReference type="EMBL" id="AP009123">
    <property type="protein sequence ID" value="BAF41244.1"/>
    <property type="molecule type" value="Genomic_DNA"/>
</dbReference>
<dbReference type="RefSeq" id="YP_913184.1">
    <property type="nucleotide sequence ID" value="NC_008641.1"/>
</dbReference>
<dbReference type="SMR" id="A0ZZ32"/>
<dbReference type="GeneID" id="4575230"/>
<dbReference type="OrthoDB" id="969236at2759"/>
<dbReference type="GO" id="GO:0009535">
    <property type="term" value="C:chloroplast thylakoid membrane"/>
    <property type="evidence" value="ECO:0007669"/>
    <property type="project" value="UniProtKB-SubCell"/>
</dbReference>
<dbReference type="GO" id="GO:0009539">
    <property type="term" value="C:photosystem II reaction center"/>
    <property type="evidence" value="ECO:0007669"/>
    <property type="project" value="InterPro"/>
</dbReference>
<dbReference type="GO" id="GO:0015979">
    <property type="term" value="P:photosynthesis"/>
    <property type="evidence" value="ECO:0007669"/>
    <property type="project" value="UniProtKB-UniRule"/>
</dbReference>
<dbReference type="GO" id="GO:0042549">
    <property type="term" value="P:photosystem II stabilization"/>
    <property type="evidence" value="ECO:0007669"/>
    <property type="project" value="InterPro"/>
</dbReference>
<dbReference type="FunFam" id="1.10.287.740:FF:000001">
    <property type="entry name" value="Photosystem II reaction center protein Z"/>
    <property type="match status" value="1"/>
</dbReference>
<dbReference type="Gene3D" id="1.10.287.740">
    <property type="entry name" value="Photosystem II PsbZ, reaction centre"/>
    <property type="match status" value="1"/>
</dbReference>
<dbReference type="HAMAP" id="MF_00644">
    <property type="entry name" value="PSII_PsbZ"/>
    <property type="match status" value="1"/>
</dbReference>
<dbReference type="InterPro" id="IPR002644">
    <property type="entry name" value="PSII_PsbZ"/>
</dbReference>
<dbReference type="InterPro" id="IPR036512">
    <property type="entry name" value="PSII_PsbZ_sf"/>
</dbReference>
<dbReference type="NCBIfam" id="TIGR03043">
    <property type="entry name" value="PS_II_psbZ"/>
    <property type="match status" value="1"/>
</dbReference>
<dbReference type="PANTHER" id="PTHR34971">
    <property type="entry name" value="PHOTOSYSTEM II REACTION CENTER PROTEIN Z"/>
    <property type="match status" value="1"/>
</dbReference>
<dbReference type="PANTHER" id="PTHR34971:SF2">
    <property type="entry name" value="PHOTOSYSTEM II REACTION CENTER PROTEIN Z"/>
    <property type="match status" value="1"/>
</dbReference>
<dbReference type="Pfam" id="PF01737">
    <property type="entry name" value="Ycf9"/>
    <property type="match status" value="1"/>
</dbReference>
<dbReference type="SUPFAM" id="SSF161055">
    <property type="entry name" value="PsbZ-like"/>
    <property type="match status" value="1"/>
</dbReference>
<protein>
    <recommendedName>
        <fullName evidence="1">Photosystem II reaction center protein Z</fullName>
        <shortName evidence="1">PSII-Z</shortName>
    </recommendedName>
</protein>
<evidence type="ECO:0000255" key="1">
    <source>
        <dbReference type="HAMAP-Rule" id="MF_00644"/>
    </source>
</evidence>
<geneLocation type="chloroplast"/>
<sequence>MTIAFQLAVFALIATSSILLISVPVVFASPDGWLSNKNIVFSGTSLWIGLVFLVGILNSLIS</sequence>